<evidence type="ECO:0000250" key="1"/>
<evidence type="ECO:0000256" key="2">
    <source>
        <dbReference type="SAM" id="MobiDB-lite"/>
    </source>
</evidence>
<evidence type="ECO:0000305" key="3"/>
<reference key="1">
    <citation type="submission" date="2002-11" db="EMBL/GenBank/DDBJ databases">
        <title>Cloning of UDP-glucose 4-epimerase genes in Oryza sativa.</title>
        <authorList>
            <person name="Suzuki K."/>
            <person name="Kitamura S."/>
        </authorList>
    </citation>
    <scope>NUCLEOTIDE SEQUENCE [MRNA]</scope>
    <source>
        <strain>cv. Nipponbare</strain>
        <tissue>Immature seed</tissue>
    </source>
</reference>
<reference key="2">
    <citation type="journal article" date="2005" name="Nature">
        <title>The map-based sequence of the rice genome.</title>
        <authorList>
            <consortium name="International rice genome sequencing project (IRGSP)"/>
        </authorList>
    </citation>
    <scope>NUCLEOTIDE SEQUENCE [LARGE SCALE GENOMIC DNA]</scope>
    <source>
        <strain>cv. Nipponbare</strain>
    </source>
</reference>
<reference key="3">
    <citation type="journal article" date="2008" name="Nucleic Acids Res.">
        <title>The rice annotation project database (RAP-DB): 2008 update.</title>
        <authorList>
            <consortium name="The rice annotation project (RAP)"/>
        </authorList>
    </citation>
    <scope>GENOME REANNOTATION</scope>
    <source>
        <strain>cv. Nipponbare</strain>
    </source>
</reference>
<reference key="4">
    <citation type="journal article" date="2013" name="Rice">
        <title>Improvement of the Oryza sativa Nipponbare reference genome using next generation sequence and optical map data.</title>
        <authorList>
            <person name="Kawahara Y."/>
            <person name="de la Bastide M."/>
            <person name="Hamilton J.P."/>
            <person name="Kanamori H."/>
            <person name="McCombie W.R."/>
            <person name="Ouyang S."/>
            <person name="Schwartz D.C."/>
            <person name="Tanaka T."/>
            <person name="Wu J."/>
            <person name="Zhou S."/>
            <person name="Childs K.L."/>
            <person name="Davidson R.M."/>
            <person name="Lin H."/>
            <person name="Quesada-Ocampo L."/>
            <person name="Vaillancourt B."/>
            <person name="Sakai H."/>
            <person name="Lee S.S."/>
            <person name="Kim J."/>
            <person name="Numa H."/>
            <person name="Itoh T."/>
            <person name="Buell C.R."/>
            <person name="Matsumoto T."/>
        </authorList>
    </citation>
    <scope>GENOME REANNOTATION</scope>
    <source>
        <strain>cv. Nipponbare</strain>
    </source>
</reference>
<reference key="5">
    <citation type="journal article" date="2003" name="Science">
        <title>Collection, mapping, and annotation of over 28,000 cDNA clones from japonica rice.</title>
        <authorList>
            <consortium name="The rice full-length cDNA consortium"/>
        </authorList>
    </citation>
    <scope>NUCLEOTIDE SEQUENCE [LARGE SCALE MRNA]</scope>
    <source>
        <strain>cv. Nipponbare</strain>
    </source>
</reference>
<reference key="6">
    <citation type="journal article" date="2006" name="Biochem. J.">
        <title>Gene expression patterns and catalytic properties of UDP-D-glucose 4-epimerases from barley (Hordeum vulgare L.).</title>
        <authorList>
            <person name="Zhang Q."/>
            <person name="Hrmova M."/>
            <person name="Shirley N.J."/>
            <person name="Lahnstein J."/>
            <person name="Fincher G.B."/>
        </authorList>
    </citation>
    <scope>GENE FAMILY</scope>
</reference>
<accession>Q6ZDJ7</accession>
<accession>A0A0P0XEZ7</accession>
<accession>Q8H931</accession>
<name>UGE2_ORYSJ</name>
<organism>
    <name type="scientific">Oryza sativa subsp. japonica</name>
    <name type="common">Rice</name>
    <dbReference type="NCBI Taxonomy" id="39947"/>
    <lineage>
        <taxon>Eukaryota</taxon>
        <taxon>Viridiplantae</taxon>
        <taxon>Streptophyta</taxon>
        <taxon>Embryophyta</taxon>
        <taxon>Tracheophyta</taxon>
        <taxon>Spermatophyta</taxon>
        <taxon>Magnoliopsida</taxon>
        <taxon>Liliopsida</taxon>
        <taxon>Poales</taxon>
        <taxon>Poaceae</taxon>
        <taxon>BOP clade</taxon>
        <taxon>Oryzoideae</taxon>
        <taxon>Oryzeae</taxon>
        <taxon>Oryzinae</taxon>
        <taxon>Oryza</taxon>
        <taxon>Oryza sativa</taxon>
    </lineage>
</organism>
<keyword id="KW-0119">Carbohydrate metabolism</keyword>
<keyword id="KW-0299">Galactose metabolism</keyword>
<keyword id="KW-0413">Isomerase</keyword>
<keyword id="KW-0520">NAD</keyword>
<keyword id="KW-1185">Reference proteome</keyword>
<comment type="function">
    <text evidence="1">Catalyzes the interconversion between UDP-glucose and UDP-galactose.</text>
</comment>
<comment type="catalytic activity">
    <reaction>
        <text>UDP-alpha-D-glucose = UDP-alpha-D-galactose</text>
        <dbReference type="Rhea" id="RHEA:22168"/>
        <dbReference type="ChEBI" id="CHEBI:58885"/>
        <dbReference type="ChEBI" id="CHEBI:66914"/>
        <dbReference type="EC" id="5.1.3.2"/>
    </reaction>
</comment>
<comment type="cofactor">
    <cofactor evidence="1">
        <name>NAD(+)</name>
        <dbReference type="ChEBI" id="CHEBI:57540"/>
    </cofactor>
</comment>
<comment type="pathway">
    <text>Carbohydrate metabolism; galactose metabolism.</text>
</comment>
<comment type="similarity">
    <text evidence="3">Belongs to the NAD(P)-dependent epimerase/dehydratase family.</text>
</comment>
<protein>
    <recommendedName>
        <fullName>UDP-glucose 4-epimerase 2</fullName>
        <shortName>OsUGE-2</shortName>
        <ecNumber>5.1.3.2</ecNumber>
    </recommendedName>
    <alternativeName>
        <fullName>UDP-galactose 4-epimerase 2</fullName>
    </alternativeName>
</protein>
<gene>
    <name type="primary">UGE-2</name>
    <name type="ordered locus">Os08g0374800</name>
    <name type="ordered locus">LOC_Os08g28730</name>
    <name type="ORF">P0436B06.11</name>
</gene>
<dbReference type="EC" id="5.1.3.2"/>
<dbReference type="EMBL" id="AB096863">
    <property type="protein sequence ID" value="BAC24803.1"/>
    <property type="molecule type" value="mRNA"/>
</dbReference>
<dbReference type="EMBL" id="AP004397">
    <property type="protein sequence ID" value="BAD05280.1"/>
    <property type="molecule type" value="Genomic_DNA"/>
</dbReference>
<dbReference type="EMBL" id="AP008214">
    <property type="protein sequence ID" value="BAF23582.1"/>
    <property type="molecule type" value="Genomic_DNA"/>
</dbReference>
<dbReference type="EMBL" id="AP014964">
    <property type="protein sequence ID" value="BAT05183.1"/>
    <property type="molecule type" value="Genomic_DNA"/>
</dbReference>
<dbReference type="EMBL" id="AK066269">
    <property type="status" value="NOT_ANNOTATED_CDS"/>
    <property type="molecule type" value="mRNA"/>
</dbReference>
<dbReference type="RefSeq" id="XP_015650590.1">
    <property type="nucleotide sequence ID" value="XM_015795104.1"/>
</dbReference>
<dbReference type="SMR" id="Q6ZDJ7"/>
<dbReference type="FunCoup" id="Q6ZDJ7">
    <property type="interactions" value="381"/>
</dbReference>
<dbReference type="STRING" id="39947.Q6ZDJ7"/>
<dbReference type="PaxDb" id="39947-Q6ZDJ7"/>
<dbReference type="EnsemblPlants" id="Os08t0374800-01">
    <property type="protein sequence ID" value="Os08t0374800-01"/>
    <property type="gene ID" value="Os08g0374800"/>
</dbReference>
<dbReference type="Gramene" id="Os08t0374800-01">
    <property type="protein sequence ID" value="Os08t0374800-01"/>
    <property type="gene ID" value="Os08g0374800"/>
</dbReference>
<dbReference type="KEGG" id="dosa:Os08g0374800"/>
<dbReference type="eggNOG" id="KOG1371">
    <property type="taxonomic scope" value="Eukaryota"/>
</dbReference>
<dbReference type="HOGENOM" id="CLU_007383_1_10_1"/>
<dbReference type="InParanoid" id="Q6ZDJ7"/>
<dbReference type="OMA" id="CAPVNPY"/>
<dbReference type="OrthoDB" id="9402762at2759"/>
<dbReference type="PlantReactome" id="R-OSA-1119452">
    <property type="pathway name" value="Galactose degradation II"/>
</dbReference>
<dbReference type="UniPathway" id="UPA00214"/>
<dbReference type="Proteomes" id="UP000000763">
    <property type="component" value="Chromosome 8"/>
</dbReference>
<dbReference type="Proteomes" id="UP000059680">
    <property type="component" value="Chromosome 8"/>
</dbReference>
<dbReference type="GO" id="GO:0005829">
    <property type="term" value="C:cytosol"/>
    <property type="evidence" value="ECO:0000318"/>
    <property type="project" value="GO_Central"/>
</dbReference>
<dbReference type="GO" id="GO:0003978">
    <property type="term" value="F:UDP-glucose 4-epimerase activity"/>
    <property type="evidence" value="ECO:0000318"/>
    <property type="project" value="GO_Central"/>
</dbReference>
<dbReference type="GO" id="GO:0006012">
    <property type="term" value="P:galactose metabolic process"/>
    <property type="evidence" value="ECO:0007669"/>
    <property type="project" value="UniProtKB-UniPathway"/>
</dbReference>
<dbReference type="GO" id="GO:0005996">
    <property type="term" value="P:monosaccharide metabolic process"/>
    <property type="evidence" value="ECO:0000318"/>
    <property type="project" value="GO_Central"/>
</dbReference>
<dbReference type="CDD" id="cd05247">
    <property type="entry name" value="UDP_G4E_1_SDR_e"/>
    <property type="match status" value="1"/>
</dbReference>
<dbReference type="FunFam" id="3.90.25.10:FF:000078">
    <property type="entry name" value="Delta-1-pyrroline-5-carboxylate synthase B"/>
    <property type="match status" value="1"/>
</dbReference>
<dbReference type="FunFam" id="3.40.50.720:FF:000040">
    <property type="entry name" value="UDP-glucose 4-epimerase"/>
    <property type="match status" value="1"/>
</dbReference>
<dbReference type="FunFam" id="3.90.25.10:FF:000060">
    <property type="entry name" value="UDP-glucose 4-epimerase 4"/>
    <property type="match status" value="1"/>
</dbReference>
<dbReference type="Gene3D" id="3.40.50.720">
    <property type="entry name" value="NAD(P)-binding Rossmann-like Domain"/>
    <property type="match status" value="1"/>
</dbReference>
<dbReference type="Gene3D" id="3.90.25.10">
    <property type="entry name" value="UDP-galactose 4-epimerase, domain 1"/>
    <property type="match status" value="1"/>
</dbReference>
<dbReference type="InterPro" id="IPR016040">
    <property type="entry name" value="NAD(P)-bd_dom"/>
</dbReference>
<dbReference type="InterPro" id="IPR036291">
    <property type="entry name" value="NAD(P)-bd_dom_sf"/>
</dbReference>
<dbReference type="InterPro" id="IPR005886">
    <property type="entry name" value="UDP_G4E"/>
</dbReference>
<dbReference type="NCBIfam" id="TIGR01179">
    <property type="entry name" value="galE"/>
    <property type="match status" value="1"/>
</dbReference>
<dbReference type="NCBIfam" id="NF007956">
    <property type="entry name" value="PRK10675.1"/>
    <property type="match status" value="1"/>
</dbReference>
<dbReference type="PANTHER" id="PTHR43725">
    <property type="entry name" value="UDP-GLUCOSE 4-EPIMERASE"/>
    <property type="match status" value="1"/>
</dbReference>
<dbReference type="PANTHER" id="PTHR43725:SF43">
    <property type="entry name" value="UDP-GLUCOSE 4-EPIMERASE 2"/>
    <property type="match status" value="1"/>
</dbReference>
<dbReference type="Pfam" id="PF16363">
    <property type="entry name" value="GDP_Man_Dehyd"/>
    <property type="match status" value="1"/>
</dbReference>
<dbReference type="SUPFAM" id="SSF51735">
    <property type="entry name" value="NAD(P)-binding Rossmann-fold domains"/>
    <property type="match status" value="1"/>
</dbReference>
<feature type="chain" id="PRO_0000422189" description="UDP-glucose 4-epimerase 2">
    <location>
        <begin position="1"/>
        <end position="408"/>
    </location>
</feature>
<feature type="region of interest" description="Disordered" evidence="2">
    <location>
        <begin position="369"/>
        <end position="408"/>
    </location>
</feature>
<feature type="compositionally biased region" description="Polar residues" evidence="2">
    <location>
        <begin position="370"/>
        <end position="383"/>
    </location>
</feature>
<feature type="active site" description="Proton acceptor" evidence="1">
    <location>
        <position position="162"/>
    </location>
</feature>
<feature type="binding site" evidence="1">
    <location>
        <begin position="13"/>
        <end position="44"/>
    </location>
    <ligand>
        <name>NAD(+)</name>
        <dbReference type="ChEBI" id="CHEBI:57540"/>
    </ligand>
</feature>
<feature type="binding site" evidence="1">
    <location>
        <position position="138"/>
    </location>
    <ligand>
        <name>substrate</name>
    </ligand>
</feature>
<feature type="sequence conflict" description="In Ref. 5; AK066269." evidence="3" ref="5">
    <original>A</original>
    <variation>T</variation>
    <location>
        <position position="57"/>
    </location>
</feature>
<feature type="sequence conflict" description="In Ref. 1; BAC24803." evidence="3" ref="1">
    <original>N</original>
    <variation>S</variation>
    <location>
        <position position="114"/>
    </location>
</feature>
<feature type="sequence conflict" description="In Ref. 1; BAC24803." evidence="3" ref="1">
    <original>C</original>
    <variation>W</variation>
    <location>
        <position position="150"/>
    </location>
</feature>
<feature type="sequence conflict" description="In Ref. 5; AK066269." evidence="3" ref="5">
    <original>T</original>
    <variation>A</variation>
    <location>
        <position position="229"/>
    </location>
</feature>
<feature type="sequence conflict" description="In Ref. 5; AK066269." evidence="3" ref="5">
    <original>G</original>
    <variation>E</variation>
    <location>
        <position position="242"/>
    </location>
</feature>
<sequence length="408" mass="44160">MAVEKTVPGGVRTVLVTGGAGYIGSHAVLQLLLAGFRAVVVDNLNNSSELAVRRVAALAGDHSRNLAFHKVDLRDKGALEKVFASTRFDAVVHFAGLKAVGESVQKPLLYYDNNVNGTVNLLEVMSAHGCKKLVFSSSAAVYGSPKNSPCTEEFPLTPNNPYGKTKLVVEDICRDIYRTDPEWKIILLRYFNPVGAHPSGYLGEDPCGIPNNLMPYVQQVAVGRRPALTILGNDYATRDGTGVRDYIHVVDLADGHIAALQKLFESSSIGCEAYNLGTGKGTSVLEIVKAFEKASGKKIPLIIGPRRPGDAEILFSLPAKAEKELNWKAKFGIDEMCRDQWNWASKNPYGYGSLDSTKQNGHHSYGSIGSPKQNGHCTNGFSESTRHNGHNGYGLVDSAKHNGNGHFH</sequence>
<proteinExistence type="evidence at transcript level"/>